<sequence>MAKKVQAYVKLQVAAGMANPSPPVGPALGQQGVNIMEFCKAFNAKTESIEKGLPIPVVITVYSDRSFTFVTKTPPAAVLLKKAAGIKSGSGVPNKDKVGKVTSAQVREIAETKAADMTGSDVDAMMRSIEGTAHSMGLVVEG</sequence>
<feature type="chain" id="PRO_0000104418" description="Large ribosomal subunit protein uL11">
    <location>
        <begin position="1"/>
        <end position="142"/>
    </location>
</feature>
<proteinExistence type="inferred from homology"/>
<evidence type="ECO:0000255" key="1">
    <source>
        <dbReference type="HAMAP-Rule" id="MF_00736"/>
    </source>
</evidence>
<evidence type="ECO:0000305" key="2"/>
<reference key="1">
    <citation type="journal article" date="2001" name="Nature">
        <title>Genome sequence of Yersinia pestis, the causative agent of plague.</title>
        <authorList>
            <person name="Parkhill J."/>
            <person name="Wren B.W."/>
            <person name="Thomson N.R."/>
            <person name="Titball R.W."/>
            <person name="Holden M.T.G."/>
            <person name="Prentice M.B."/>
            <person name="Sebaihia M."/>
            <person name="James K.D."/>
            <person name="Churcher C.M."/>
            <person name="Mungall K.L."/>
            <person name="Baker S."/>
            <person name="Basham D."/>
            <person name="Bentley S.D."/>
            <person name="Brooks K."/>
            <person name="Cerdeno-Tarraga A.-M."/>
            <person name="Chillingworth T."/>
            <person name="Cronin A."/>
            <person name="Davies R.M."/>
            <person name="Davis P."/>
            <person name="Dougan G."/>
            <person name="Feltwell T."/>
            <person name="Hamlin N."/>
            <person name="Holroyd S."/>
            <person name="Jagels K."/>
            <person name="Karlyshev A.V."/>
            <person name="Leather S."/>
            <person name="Moule S."/>
            <person name="Oyston P.C.F."/>
            <person name="Quail M.A."/>
            <person name="Rutherford K.M."/>
            <person name="Simmonds M."/>
            <person name="Skelton J."/>
            <person name="Stevens K."/>
            <person name="Whitehead S."/>
            <person name="Barrell B.G."/>
        </authorList>
    </citation>
    <scope>NUCLEOTIDE SEQUENCE [LARGE SCALE GENOMIC DNA]</scope>
    <source>
        <strain>CO-92 / Biovar Orientalis</strain>
    </source>
</reference>
<reference key="2">
    <citation type="journal article" date="2002" name="J. Bacteriol.">
        <title>Genome sequence of Yersinia pestis KIM.</title>
        <authorList>
            <person name="Deng W."/>
            <person name="Burland V."/>
            <person name="Plunkett G. III"/>
            <person name="Boutin A."/>
            <person name="Mayhew G.F."/>
            <person name="Liss P."/>
            <person name="Perna N.T."/>
            <person name="Rose D.J."/>
            <person name="Mau B."/>
            <person name="Zhou S."/>
            <person name="Schwartz D.C."/>
            <person name="Fetherston J.D."/>
            <person name="Lindler L.E."/>
            <person name="Brubaker R.R."/>
            <person name="Plano G.V."/>
            <person name="Straley S.C."/>
            <person name="McDonough K.A."/>
            <person name="Nilles M.L."/>
            <person name="Matson J.S."/>
            <person name="Blattner F.R."/>
            <person name="Perry R.D."/>
        </authorList>
    </citation>
    <scope>NUCLEOTIDE SEQUENCE [LARGE SCALE GENOMIC DNA]</scope>
    <source>
        <strain>KIM10+ / Biovar Mediaevalis</strain>
    </source>
</reference>
<reference key="3">
    <citation type="journal article" date="2004" name="DNA Res.">
        <title>Complete genome sequence of Yersinia pestis strain 91001, an isolate avirulent to humans.</title>
        <authorList>
            <person name="Song Y."/>
            <person name="Tong Z."/>
            <person name="Wang J."/>
            <person name="Wang L."/>
            <person name="Guo Z."/>
            <person name="Han Y."/>
            <person name="Zhang J."/>
            <person name="Pei D."/>
            <person name="Zhou D."/>
            <person name="Qin H."/>
            <person name="Pang X."/>
            <person name="Han Y."/>
            <person name="Zhai J."/>
            <person name="Li M."/>
            <person name="Cui B."/>
            <person name="Qi Z."/>
            <person name="Jin L."/>
            <person name="Dai R."/>
            <person name="Chen F."/>
            <person name="Li S."/>
            <person name="Ye C."/>
            <person name="Du Z."/>
            <person name="Lin W."/>
            <person name="Wang J."/>
            <person name="Yu J."/>
            <person name="Yang H."/>
            <person name="Wang J."/>
            <person name="Huang P."/>
            <person name="Yang R."/>
        </authorList>
    </citation>
    <scope>NUCLEOTIDE SEQUENCE [LARGE SCALE GENOMIC DNA]</scope>
    <source>
        <strain>91001 / Biovar Mediaevalis</strain>
    </source>
</reference>
<gene>
    <name evidence="1" type="primary">rplK</name>
    <name type="ordered locus">YPO3751</name>
    <name type="ordered locus">y0480</name>
    <name type="ordered locus">YP_3114</name>
</gene>
<comment type="function">
    <text evidence="1">Forms part of the ribosomal stalk which helps the ribosome interact with GTP-bound translation factors.</text>
</comment>
<comment type="subunit">
    <text evidence="1">Part of the ribosomal stalk of the 50S ribosomal subunit. Interacts with L10 and the large rRNA to form the base of the stalk. L10 forms an elongated spine to which L12 dimers bind in a sequential fashion forming a multimeric L10(L12)X complex.</text>
</comment>
<comment type="PTM">
    <text evidence="1">One or more lysine residues are methylated.</text>
</comment>
<comment type="similarity">
    <text evidence="1">Belongs to the universal ribosomal protein uL11 family.</text>
</comment>
<protein>
    <recommendedName>
        <fullName evidence="1">Large ribosomal subunit protein uL11</fullName>
    </recommendedName>
    <alternativeName>
        <fullName evidence="2">50S ribosomal protein L11</fullName>
    </alternativeName>
</protein>
<accession>Q8ZAP1</accession>
<accession>Q0WAQ7</accession>
<dbReference type="EMBL" id="AL590842">
    <property type="protein sequence ID" value="CAL22338.1"/>
    <property type="molecule type" value="Genomic_DNA"/>
</dbReference>
<dbReference type="EMBL" id="AE009952">
    <property type="protein sequence ID" value="AAM84069.1"/>
    <property type="molecule type" value="Genomic_DNA"/>
</dbReference>
<dbReference type="EMBL" id="AE017042">
    <property type="protein sequence ID" value="AAS63284.1"/>
    <property type="molecule type" value="Genomic_DNA"/>
</dbReference>
<dbReference type="PIR" id="AG0456">
    <property type="entry name" value="AG0456"/>
</dbReference>
<dbReference type="RefSeq" id="WP_002210672.1">
    <property type="nucleotide sequence ID" value="NZ_WUCM01000099.1"/>
</dbReference>
<dbReference type="RefSeq" id="YP_002348631.1">
    <property type="nucleotide sequence ID" value="NC_003143.1"/>
</dbReference>
<dbReference type="SMR" id="Q8ZAP1"/>
<dbReference type="STRING" id="214092.YPO3751"/>
<dbReference type="PaxDb" id="214092-YPO3751"/>
<dbReference type="DNASU" id="1145427"/>
<dbReference type="EnsemblBacteria" id="AAS63284">
    <property type="protein sequence ID" value="AAS63284"/>
    <property type="gene ID" value="YP_3114"/>
</dbReference>
<dbReference type="GeneID" id="96663772"/>
<dbReference type="KEGG" id="ype:YPO3751"/>
<dbReference type="KEGG" id="ypk:y0480"/>
<dbReference type="KEGG" id="ypm:YP_3114"/>
<dbReference type="PATRIC" id="fig|214092.21.peg.4269"/>
<dbReference type="eggNOG" id="COG0080">
    <property type="taxonomic scope" value="Bacteria"/>
</dbReference>
<dbReference type="HOGENOM" id="CLU_074237_2_0_6"/>
<dbReference type="OMA" id="CKQFNAK"/>
<dbReference type="OrthoDB" id="9802408at2"/>
<dbReference type="Proteomes" id="UP000000815">
    <property type="component" value="Chromosome"/>
</dbReference>
<dbReference type="Proteomes" id="UP000001019">
    <property type="component" value="Chromosome"/>
</dbReference>
<dbReference type="Proteomes" id="UP000002490">
    <property type="component" value="Chromosome"/>
</dbReference>
<dbReference type="GO" id="GO:0022625">
    <property type="term" value="C:cytosolic large ribosomal subunit"/>
    <property type="evidence" value="ECO:0000318"/>
    <property type="project" value="GO_Central"/>
</dbReference>
<dbReference type="GO" id="GO:0070180">
    <property type="term" value="F:large ribosomal subunit rRNA binding"/>
    <property type="evidence" value="ECO:0000318"/>
    <property type="project" value="GO_Central"/>
</dbReference>
<dbReference type="GO" id="GO:0003735">
    <property type="term" value="F:structural constituent of ribosome"/>
    <property type="evidence" value="ECO:0000318"/>
    <property type="project" value="GO_Central"/>
</dbReference>
<dbReference type="GO" id="GO:0006412">
    <property type="term" value="P:translation"/>
    <property type="evidence" value="ECO:0000318"/>
    <property type="project" value="GO_Central"/>
</dbReference>
<dbReference type="CDD" id="cd00349">
    <property type="entry name" value="Ribosomal_L11"/>
    <property type="match status" value="1"/>
</dbReference>
<dbReference type="FunFam" id="1.10.10.250:FF:000001">
    <property type="entry name" value="50S ribosomal protein L11"/>
    <property type="match status" value="1"/>
</dbReference>
<dbReference type="FunFam" id="3.30.1550.10:FF:000001">
    <property type="entry name" value="50S ribosomal protein L11"/>
    <property type="match status" value="1"/>
</dbReference>
<dbReference type="Gene3D" id="1.10.10.250">
    <property type="entry name" value="Ribosomal protein L11, C-terminal domain"/>
    <property type="match status" value="1"/>
</dbReference>
<dbReference type="Gene3D" id="3.30.1550.10">
    <property type="entry name" value="Ribosomal protein L11/L12, N-terminal domain"/>
    <property type="match status" value="1"/>
</dbReference>
<dbReference type="HAMAP" id="MF_00736">
    <property type="entry name" value="Ribosomal_uL11"/>
    <property type="match status" value="1"/>
</dbReference>
<dbReference type="InterPro" id="IPR000911">
    <property type="entry name" value="Ribosomal_uL11"/>
</dbReference>
<dbReference type="InterPro" id="IPR006519">
    <property type="entry name" value="Ribosomal_uL11_bac-typ"/>
</dbReference>
<dbReference type="InterPro" id="IPR020783">
    <property type="entry name" value="Ribosomal_uL11_C"/>
</dbReference>
<dbReference type="InterPro" id="IPR036769">
    <property type="entry name" value="Ribosomal_uL11_C_sf"/>
</dbReference>
<dbReference type="InterPro" id="IPR020785">
    <property type="entry name" value="Ribosomal_uL11_CS"/>
</dbReference>
<dbReference type="InterPro" id="IPR020784">
    <property type="entry name" value="Ribosomal_uL11_N"/>
</dbReference>
<dbReference type="InterPro" id="IPR036796">
    <property type="entry name" value="Ribosomal_uL11_N_sf"/>
</dbReference>
<dbReference type="NCBIfam" id="TIGR01632">
    <property type="entry name" value="L11_bact"/>
    <property type="match status" value="1"/>
</dbReference>
<dbReference type="PANTHER" id="PTHR11661">
    <property type="entry name" value="60S RIBOSOMAL PROTEIN L12"/>
    <property type="match status" value="1"/>
</dbReference>
<dbReference type="PANTHER" id="PTHR11661:SF1">
    <property type="entry name" value="LARGE RIBOSOMAL SUBUNIT PROTEIN UL11M"/>
    <property type="match status" value="1"/>
</dbReference>
<dbReference type="Pfam" id="PF00298">
    <property type="entry name" value="Ribosomal_L11"/>
    <property type="match status" value="1"/>
</dbReference>
<dbReference type="Pfam" id="PF03946">
    <property type="entry name" value="Ribosomal_L11_N"/>
    <property type="match status" value="1"/>
</dbReference>
<dbReference type="SMART" id="SM00649">
    <property type="entry name" value="RL11"/>
    <property type="match status" value="1"/>
</dbReference>
<dbReference type="SUPFAM" id="SSF54747">
    <property type="entry name" value="Ribosomal L11/L12e N-terminal domain"/>
    <property type="match status" value="1"/>
</dbReference>
<dbReference type="SUPFAM" id="SSF46906">
    <property type="entry name" value="Ribosomal protein L11, C-terminal domain"/>
    <property type="match status" value="1"/>
</dbReference>
<dbReference type="PROSITE" id="PS00359">
    <property type="entry name" value="RIBOSOMAL_L11"/>
    <property type="match status" value="1"/>
</dbReference>
<name>RL11_YERPE</name>
<organism>
    <name type="scientific">Yersinia pestis</name>
    <dbReference type="NCBI Taxonomy" id="632"/>
    <lineage>
        <taxon>Bacteria</taxon>
        <taxon>Pseudomonadati</taxon>
        <taxon>Pseudomonadota</taxon>
        <taxon>Gammaproteobacteria</taxon>
        <taxon>Enterobacterales</taxon>
        <taxon>Yersiniaceae</taxon>
        <taxon>Yersinia</taxon>
    </lineage>
</organism>
<keyword id="KW-0488">Methylation</keyword>
<keyword id="KW-1185">Reference proteome</keyword>
<keyword id="KW-0687">Ribonucleoprotein</keyword>
<keyword id="KW-0689">Ribosomal protein</keyword>
<keyword id="KW-0694">RNA-binding</keyword>
<keyword id="KW-0699">rRNA-binding</keyword>